<feature type="chain" id="PRO_1000072484" description="D-aminoacyl-tRNA deacylase">
    <location>
        <begin position="1"/>
        <end position="149"/>
    </location>
</feature>
<feature type="short sequence motif" description="Gly-cisPro motif, important for rejection of L-amino acids" evidence="1">
    <location>
        <begin position="137"/>
        <end position="138"/>
    </location>
</feature>
<gene>
    <name evidence="1" type="primary">dtd</name>
    <name type="ordered locus">Dred_0734</name>
</gene>
<name>DTD_DESRM</name>
<proteinExistence type="inferred from homology"/>
<keyword id="KW-0963">Cytoplasm</keyword>
<keyword id="KW-0378">Hydrolase</keyword>
<keyword id="KW-1185">Reference proteome</keyword>
<keyword id="KW-0694">RNA-binding</keyword>
<keyword id="KW-0820">tRNA-binding</keyword>
<comment type="function">
    <text evidence="1">An aminoacyl-tRNA editing enzyme that deacylates mischarged D-aminoacyl-tRNAs. Also deacylates mischarged glycyl-tRNA(Ala), protecting cells against glycine mischarging by AlaRS. Acts via tRNA-based rather than protein-based catalysis; rejects L-amino acids rather than detecting D-amino acids in the active site. By recycling D-aminoacyl-tRNA to D-amino acids and free tRNA molecules, this enzyme counteracts the toxicity associated with the formation of D-aminoacyl-tRNA entities in vivo and helps enforce protein L-homochirality.</text>
</comment>
<comment type="catalytic activity">
    <reaction evidence="1">
        <text>glycyl-tRNA(Ala) + H2O = tRNA(Ala) + glycine + H(+)</text>
        <dbReference type="Rhea" id="RHEA:53744"/>
        <dbReference type="Rhea" id="RHEA-COMP:9657"/>
        <dbReference type="Rhea" id="RHEA-COMP:13640"/>
        <dbReference type="ChEBI" id="CHEBI:15377"/>
        <dbReference type="ChEBI" id="CHEBI:15378"/>
        <dbReference type="ChEBI" id="CHEBI:57305"/>
        <dbReference type="ChEBI" id="CHEBI:78442"/>
        <dbReference type="ChEBI" id="CHEBI:78522"/>
        <dbReference type="EC" id="3.1.1.96"/>
    </reaction>
</comment>
<comment type="catalytic activity">
    <reaction evidence="1">
        <text>a D-aminoacyl-tRNA + H2O = a tRNA + a D-alpha-amino acid + H(+)</text>
        <dbReference type="Rhea" id="RHEA:13953"/>
        <dbReference type="Rhea" id="RHEA-COMP:10123"/>
        <dbReference type="Rhea" id="RHEA-COMP:10124"/>
        <dbReference type="ChEBI" id="CHEBI:15377"/>
        <dbReference type="ChEBI" id="CHEBI:15378"/>
        <dbReference type="ChEBI" id="CHEBI:59871"/>
        <dbReference type="ChEBI" id="CHEBI:78442"/>
        <dbReference type="ChEBI" id="CHEBI:79333"/>
        <dbReference type="EC" id="3.1.1.96"/>
    </reaction>
</comment>
<comment type="subunit">
    <text evidence="1">Homodimer.</text>
</comment>
<comment type="subcellular location">
    <subcellularLocation>
        <location evidence="1">Cytoplasm</location>
    </subcellularLocation>
</comment>
<comment type="domain">
    <text evidence="1">A Gly-cisPro motif from one monomer fits into the active site of the other monomer to allow specific chiral rejection of L-amino acids.</text>
</comment>
<comment type="similarity">
    <text evidence="1">Belongs to the DTD family.</text>
</comment>
<organism>
    <name type="scientific">Desulforamulus reducens (strain ATCC BAA-1160 / DSM 100696 / MI-1)</name>
    <name type="common">Desulfotomaculum reducens</name>
    <dbReference type="NCBI Taxonomy" id="349161"/>
    <lineage>
        <taxon>Bacteria</taxon>
        <taxon>Bacillati</taxon>
        <taxon>Bacillota</taxon>
        <taxon>Clostridia</taxon>
        <taxon>Eubacteriales</taxon>
        <taxon>Peptococcaceae</taxon>
        <taxon>Desulforamulus</taxon>
    </lineage>
</organism>
<reference key="1">
    <citation type="submission" date="2007-03" db="EMBL/GenBank/DDBJ databases">
        <title>Complete sequence of Desulfotomaculum reducens MI-1.</title>
        <authorList>
            <consortium name="US DOE Joint Genome Institute"/>
            <person name="Copeland A."/>
            <person name="Lucas S."/>
            <person name="Lapidus A."/>
            <person name="Barry K."/>
            <person name="Detter J.C."/>
            <person name="Glavina del Rio T."/>
            <person name="Hammon N."/>
            <person name="Israni S."/>
            <person name="Dalin E."/>
            <person name="Tice H."/>
            <person name="Pitluck S."/>
            <person name="Sims D."/>
            <person name="Brettin T."/>
            <person name="Bruce D."/>
            <person name="Han C."/>
            <person name="Tapia R."/>
            <person name="Schmutz J."/>
            <person name="Larimer F."/>
            <person name="Land M."/>
            <person name="Hauser L."/>
            <person name="Kyrpides N."/>
            <person name="Kim E."/>
            <person name="Tebo B.M."/>
            <person name="Richardson P."/>
        </authorList>
    </citation>
    <scope>NUCLEOTIDE SEQUENCE [LARGE SCALE GENOMIC DNA]</scope>
    <source>
        <strain>ATCC BAA-1160 / DSM 100696 / MI-1</strain>
    </source>
</reference>
<accession>A4J2H0</accession>
<dbReference type="EC" id="3.1.1.96" evidence="1"/>
<dbReference type="EMBL" id="CP000612">
    <property type="protein sequence ID" value="ABO49273.1"/>
    <property type="molecule type" value="Genomic_DNA"/>
</dbReference>
<dbReference type="RefSeq" id="WP_011877109.1">
    <property type="nucleotide sequence ID" value="NC_009253.1"/>
</dbReference>
<dbReference type="SMR" id="A4J2H0"/>
<dbReference type="STRING" id="349161.Dred_0734"/>
<dbReference type="KEGG" id="drm:Dred_0734"/>
<dbReference type="eggNOG" id="COG1490">
    <property type="taxonomic scope" value="Bacteria"/>
</dbReference>
<dbReference type="HOGENOM" id="CLU_076901_1_0_9"/>
<dbReference type="OrthoDB" id="9801395at2"/>
<dbReference type="Proteomes" id="UP000001556">
    <property type="component" value="Chromosome"/>
</dbReference>
<dbReference type="GO" id="GO:0005737">
    <property type="term" value="C:cytoplasm"/>
    <property type="evidence" value="ECO:0007669"/>
    <property type="project" value="UniProtKB-SubCell"/>
</dbReference>
<dbReference type="GO" id="GO:0051500">
    <property type="term" value="F:D-tyrosyl-tRNA(Tyr) deacylase activity"/>
    <property type="evidence" value="ECO:0007669"/>
    <property type="project" value="TreeGrafter"/>
</dbReference>
<dbReference type="GO" id="GO:0106026">
    <property type="term" value="F:Gly-tRNA(Ala) deacylase activity"/>
    <property type="evidence" value="ECO:0007669"/>
    <property type="project" value="UniProtKB-UniRule"/>
</dbReference>
<dbReference type="GO" id="GO:0043908">
    <property type="term" value="F:Ser(Gly)-tRNA(Ala) hydrolase activity"/>
    <property type="evidence" value="ECO:0007669"/>
    <property type="project" value="UniProtKB-UniRule"/>
</dbReference>
<dbReference type="GO" id="GO:0000049">
    <property type="term" value="F:tRNA binding"/>
    <property type="evidence" value="ECO:0007669"/>
    <property type="project" value="UniProtKB-UniRule"/>
</dbReference>
<dbReference type="GO" id="GO:0019478">
    <property type="term" value="P:D-amino acid catabolic process"/>
    <property type="evidence" value="ECO:0007669"/>
    <property type="project" value="UniProtKB-UniRule"/>
</dbReference>
<dbReference type="CDD" id="cd00563">
    <property type="entry name" value="Dtyr_deacylase"/>
    <property type="match status" value="1"/>
</dbReference>
<dbReference type="FunFam" id="3.50.80.10:FF:000001">
    <property type="entry name" value="D-aminoacyl-tRNA deacylase"/>
    <property type="match status" value="1"/>
</dbReference>
<dbReference type="Gene3D" id="3.50.80.10">
    <property type="entry name" value="D-tyrosyl-tRNA(Tyr) deacylase"/>
    <property type="match status" value="1"/>
</dbReference>
<dbReference type="HAMAP" id="MF_00518">
    <property type="entry name" value="Deacylase_Dtd"/>
    <property type="match status" value="1"/>
</dbReference>
<dbReference type="InterPro" id="IPR003732">
    <property type="entry name" value="Daa-tRNA_deacyls_DTD"/>
</dbReference>
<dbReference type="InterPro" id="IPR023509">
    <property type="entry name" value="DTD-like_sf"/>
</dbReference>
<dbReference type="NCBIfam" id="TIGR00256">
    <property type="entry name" value="D-aminoacyl-tRNA deacylase"/>
    <property type="match status" value="1"/>
</dbReference>
<dbReference type="PANTHER" id="PTHR10472:SF5">
    <property type="entry name" value="D-AMINOACYL-TRNA DEACYLASE 1"/>
    <property type="match status" value="1"/>
</dbReference>
<dbReference type="PANTHER" id="PTHR10472">
    <property type="entry name" value="D-TYROSYL-TRNA TYR DEACYLASE"/>
    <property type="match status" value="1"/>
</dbReference>
<dbReference type="Pfam" id="PF02580">
    <property type="entry name" value="Tyr_Deacylase"/>
    <property type="match status" value="1"/>
</dbReference>
<dbReference type="SUPFAM" id="SSF69500">
    <property type="entry name" value="DTD-like"/>
    <property type="match status" value="1"/>
</dbReference>
<sequence length="149" mass="16161">MRAVVQRVLKGSVTVNNEVVGKIGQGLVVLLGVGQGDCVDDARYLADKISQLRIFDDEQGKLNLSIQDVKGSILAISQFTLYGDCRKGRRPGYSGAAAPDTARELYESFVQRLVCNGLTTSTGVFQEHMVVEIINDGPVTLLLDSRKGF</sequence>
<evidence type="ECO:0000255" key="1">
    <source>
        <dbReference type="HAMAP-Rule" id="MF_00518"/>
    </source>
</evidence>
<protein>
    <recommendedName>
        <fullName evidence="1">D-aminoacyl-tRNA deacylase</fullName>
        <shortName evidence="1">DTD</shortName>
        <ecNumber evidence="1">3.1.1.96</ecNumber>
    </recommendedName>
    <alternativeName>
        <fullName evidence="1">Gly-tRNA(Ala) deacylase</fullName>
    </alternativeName>
</protein>